<evidence type="ECO:0000250" key="1">
    <source>
        <dbReference type="UniProtKB" id="P59046"/>
    </source>
</evidence>
<evidence type="ECO:0000255" key="2"/>
<evidence type="ECO:0000255" key="3">
    <source>
        <dbReference type="PROSITE-ProRule" id="PRU00061"/>
    </source>
</evidence>
<evidence type="ECO:0000255" key="4">
    <source>
        <dbReference type="PROSITE-ProRule" id="PRU00136"/>
    </source>
</evidence>
<evidence type="ECO:0000269" key="5">
    <source>
    </source>
</evidence>
<evidence type="ECO:0000269" key="6">
    <source>
    </source>
</evidence>
<evidence type="ECO:0000269" key="7">
    <source>
    </source>
</evidence>
<evidence type="ECO:0000269" key="8">
    <source>
    </source>
</evidence>
<evidence type="ECO:0000269" key="9">
    <source>
    </source>
</evidence>
<evidence type="ECO:0000305" key="10"/>
<dbReference type="EMBL" id="CAAA01093162">
    <property type="status" value="NOT_ANNOTATED_CDS"/>
    <property type="molecule type" value="Genomic_DNA"/>
</dbReference>
<dbReference type="EMBL" id="CAAA01093166">
    <property type="status" value="NOT_ANNOTATED_CDS"/>
    <property type="molecule type" value="Genomic_DNA"/>
</dbReference>
<dbReference type="EMBL" id="CAAA01193276">
    <property type="status" value="NOT_ANNOTATED_CDS"/>
    <property type="molecule type" value="Genomic_DNA"/>
</dbReference>
<dbReference type="EMBL" id="AK149454">
    <property type="protein sequence ID" value="BAE28888.1"/>
    <property type="molecule type" value="mRNA"/>
</dbReference>
<dbReference type="CCDS" id="CCDS51963.1"/>
<dbReference type="RefSeq" id="NP_001028603.1">
    <property type="nucleotide sequence ID" value="NM_001033431.1"/>
</dbReference>
<dbReference type="EMDB" id="EMD-23303"/>
<dbReference type="EMDB" id="EMD-23304"/>
<dbReference type="EMDB" id="EMD-23305"/>
<dbReference type="SMR" id="E9Q5R7"/>
<dbReference type="BioGRID" id="237541">
    <property type="interactions" value="1"/>
</dbReference>
<dbReference type="FunCoup" id="E9Q5R7">
    <property type="interactions" value="400"/>
</dbReference>
<dbReference type="IntAct" id="E9Q5R7">
    <property type="interactions" value="1"/>
</dbReference>
<dbReference type="STRING" id="10090.ENSMUSP00000104293"/>
<dbReference type="PhosphoSitePlus" id="E9Q5R7"/>
<dbReference type="PaxDb" id="10090-ENSMUSP00000104293"/>
<dbReference type="ProteomicsDB" id="286146"/>
<dbReference type="Antibodypedia" id="32741">
    <property type="antibodies" value="320 antibodies from 34 providers"/>
</dbReference>
<dbReference type="DNASU" id="378425"/>
<dbReference type="Ensembl" id="ENSMUST00000108653.4">
    <property type="protein sequence ID" value="ENSMUSP00000104293.3"/>
    <property type="gene ID" value="ENSMUSG00000078817.5"/>
</dbReference>
<dbReference type="GeneID" id="378425"/>
<dbReference type="KEGG" id="mmu:378425"/>
<dbReference type="UCSC" id="uc009eul.2">
    <property type="organism name" value="mouse"/>
</dbReference>
<dbReference type="AGR" id="MGI:2676630"/>
<dbReference type="CTD" id="91662"/>
<dbReference type="MGI" id="MGI:2676630">
    <property type="gene designation" value="Nlrp12"/>
</dbReference>
<dbReference type="VEuPathDB" id="HostDB:ENSMUSG00000078817"/>
<dbReference type="eggNOG" id="ENOG502SBIG">
    <property type="taxonomic scope" value="Eukaryota"/>
</dbReference>
<dbReference type="GeneTree" id="ENSGT00940000160873"/>
<dbReference type="HOGENOM" id="CLU_002274_2_0_1"/>
<dbReference type="InParanoid" id="E9Q5R7"/>
<dbReference type="OMA" id="TTAVYMF"/>
<dbReference type="OrthoDB" id="49338at9989"/>
<dbReference type="PhylomeDB" id="E9Q5R7"/>
<dbReference type="BioGRID-ORCS" id="378425">
    <property type="hits" value="4 hits in 79 CRISPR screens"/>
</dbReference>
<dbReference type="ChiTaRS" id="Nlrp12">
    <property type="organism name" value="mouse"/>
</dbReference>
<dbReference type="PRO" id="PR:E9Q5R7"/>
<dbReference type="Proteomes" id="UP000000589">
    <property type="component" value="Chromosome 7"/>
</dbReference>
<dbReference type="RNAct" id="E9Q5R7">
    <property type="molecule type" value="protein"/>
</dbReference>
<dbReference type="Bgee" id="ENSMUSG00000078817">
    <property type="expression patterns" value="Expressed in granulocyte and 10 other cell types or tissues"/>
</dbReference>
<dbReference type="GO" id="GO:0005737">
    <property type="term" value="C:cytoplasm"/>
    <property type="evidence" value="ECO:0000266"/>
    <property type="project" value="MGI"/>
</dbReference>
<dbReference type="GO" id="GO:0005524">
    <property type="term" value="F:ATP binding"/>
    <property type="evidence" value="ECO:0007669"/>
    <property type="project" value="UniProtKB-KW"/>
</dbReference>
<dbReference type="GO" id="GO:0030674">
    <property type="term" value="F:protein-macromolecule adaptor activity"/>
    <property type="evidence" value="ECO:0000314"/>
    <property type="project" value="MGI"/>
</dbReference>
<dbReference type="GO" id="GO:0071345">
    <property type="term" value="P:cellular response to cytokine stimulus"/>
    <property type="evidence" value="ECO:0000315"/>
    <property type="project" value="MGI"/>
</dbReference>
<dbReference type="GO" id="GO:0036336">
    <property type="term" value="P:dendritic cell migration"/>
    <property type="evidence" value="ECO:0000315"/>
    <property type="project" value="MGI"/>
</dbReference>
<dbReference type="GO" id="GO:0070371">
    <property type="term" value="P:ERK1 and ERK2 cascade"/>
    <property type="evidence" value="ECO:0000315"/>
    <property type="project" value="MGI"/>
</dbReference>
<dbReference type="GO" id="GO:0043124">
    <property type="term" value="P:negative regulation of canonical NF-kappaB signal transduction"/>
    <property type="evidence" value="ECO:0007669"/>
    <property type="project" value="Ensembl"/>
</dbReference>
<dbReference type="GO" id="GO:0070373">
    <property type="term" value="P:negative regulation of ERK1 and ERK2 cascade"/>
    <property type="evidence" value="ECO:0000315"/>
    <property type="project" value="MGI"/>
</dbReference>
<dbReference type="GO" id="GO:0050728">
    <property type="term" value="P:negative regulation of inflammatory response"/>
    <property type="evidence" value="ECO:0000315"/>
    <property type="project" value="UniProtKB"/>
</dbReference>
<dbReference type="GO" id="GO:0032692">
    <property type="term" value="P:negative regulation of interleukin-1 production"/>
    <property type="evidence" value="ECO:0007669"/>
    <property type="project" value="Ensembl"/>
</dbReference>
<dbReference type="GO" id="GO:0032715">
    <property type="term" value="P:negative regulation of interleukin-6 production"/>
    <property type="evidence" value="ECO:0007669"/>
    <property type="project" value="Ensembl"/>
</dbReference>
<dbReference type="GO" id="GO:1901223">
    <property type="term" value="P:negative regulation of non-canonical NF-kappaB signal transduction"/>
    <property type="evidence" value="ECO:0000315"/>
    <property type="project" value="MGI"/>
</dbReference>
<dbReference type="GO" id="GO:0045751">
    <property type="term" value="P:negative regulation of Toll signaling pathway"/>
    <property type="evidence" value="ECO:0007669"/>
    <property type="project" value="Ensembl"/>
</dbReference>
<dbReference type="GO" id="GO:0045345">
    <property type="term" value="P:positive regulation of MHC class I biosynthetic process"/>
    <property type="evidence" value="ECO:0000266"/>
    <property type="project" value="MGI"/>
</dbReference>
<dbReference type="GO" id="GO:1901224">
    <property type="term" value="P:positive regulation of non-canonical NF-kappaB signal transduction"/>
    <property type="evidence" value="ECO:0007669"/>
    <property type="project" value="Ensembl"/>
</dbReference>
<dbReference type="GO" id="GO:0043122">
    <property type="term" value="P:regulation of canonical NF-kappaB signal transduction"/>
    <property type="evidence" value="ECO:0000266"/>
    <property type="project" value="MGI"/>
</dbReference>
<dbReference type="CDD" id="cd00116">
    <property type="entry name" value="LRR_RI"/>
    <property type="match status" value="1"/>
</dbReference>
<dbReference type="CDD" id="cd08320">
    <property type="entry name" value="Pyrin_NALPs"/>
    <property type="match status" value="1"/>
</dbReference>
<dbReference type="FunFam" id="3.80.10.10:FF:000884">
    <property type="entry name" value="NACHT, LRR and PYD domains-containing protein 12"/>
    <property type="match status" value="1"/>
</dbReference>
<dbReference type="FunFam" id="1.10.533.10:FF:000064">
    <property type="entry name" value="NLR family pyrin domain containing 12"/>
    <property type="match status" value="1"/>
</dbReference>
<dbReference type="Gene3D" id="1.10.533.10">
    <property type="entry name" value="Death Domain, Fas"/>
    <property type="match status" value="1"/>
</dbReference>
<dbReference type="Gene3D" id="3.40.50.300">
    <property type="entry name" value="P-loop containing nucleotide triphosphate hydrolases"/>
    <property type="match status" value="1"/>
</dbReference>
<dbReference type="Gene3D" id="3.80.10.10">
    <property type="entry name" value="Ribonuclease Inhibitor"/>
    <property type="match status" value="2"/>
</dbReference>
<dbReference type="InterPro" id="IPR004020">
    <property type="entry name" value="DAPIN"/>
</dbReference>
<dbReference type="InterPro" id="IPR011029">
    <property type="entry name" value="DEATH-like_dom_sf"/>
</dbReference>
<dbReference type="InterPro" id="IPR001611">
    <property type="entry name" value="Leu-rich_rpt"/>
</dbReference>
<dbReference type="InterPro" id="IPR032675">
    <property type="entry name" value="LRR_dom_sf"/>
</dbReference>
<dbReference type="InterPro" id="IPR029495">
    <property type="entry name" value="NACHT-assoc"/>
</dbReference>
<dbReference type="InterPro" id="IPR007111">
    <property type="entry name" value="NACHT_NTPase"/>
</dbReference>
<dbReference type="InterPro" id="IPR041267">
    <property type="entry name" value="NLRP_HD2"/>
</dbReference>
<dbReference type="InterPro" id="IPR050637">
    <property type="entry name" value="NLRP_innate_immun_reg"/>
</dbReference>
<dbReference type="InterPro" id="IPR041075">
    <property type="entry name" value="NOD1/2_WH"/>
</dbReference>
<dbReference type="InterPro" id="IPR027417">
    <property type="entry name" value="P-loop_NTPase"/>
</dbReference>
<dbReference type="PANTHER" id="PTHR45690">
    <property type="entry name" value="NACHT, LRR AND PYD DOMAINS-CONTAINING PROTEIN 12"/>
    <property type="match status" value="1"/>
</dbReference>
<dbReference type="PANTHER" id="PTHR45690:SF11">
    <property type="entry name" value="NACHT, LRR AND PYD DOMAINS-CONTAINING PROTEIN 12"/>
    <property type="match status" value="1"/>
</dbReference>
<dbReference type="Pfam" id="PF14484">
    <property type="entry name" value="FISNA"/>
    <property type="match status" value="1"/>
</dbReference>
<dbReference type="Pfam" id="PF13516">
    <property type="entry name" value="LRR_6"/>
    <property type="match status" value="5"/>
</dbReference>
<dbReference type="Pfam" id="PF05729">
    <property type="entry name" value="NACHT"/>
    <property type="match status" value="1"/>
</dbReference>
<dbReference type="Pfam" id="PF17776">
    <property type="entry name" value="NLRC4_HD2"/>
    <property type="match status" value="1"/>
</dbReference>
<dbReference type="Pfam" id="PF17779">
    <property type="entry name" value="NOD2_WH"/>
    <property type="match status" value="1"/>
</dbReference>
<dbReference type="Pfam" id="PF02758">
    <property type="entry name" value="PYRIN"/>
    <property type="match status" value="1"/>
</dbReference>
<dbReference type="SMART" id="SM01288">
    <property type="entry name" value="FISNA"/>
    <property type="match status" value="1"/>
</dbReference>
<dbReference type="SMART" id="SM00368">
    <property type="entry name" value="LRR_RI"/>
    <property type="match status" value="11"/>
</dbReference>
<dbReference type="SMART" id="SM01289">
    <property type="entry name" value="PYRIN"/>
    <property type="match status" value="1"/>
</dbReference>
<dbReference type="SUPFAM" id="SSF47986">
    <property type="entry name" value="DEATH domain"/>
    <property type="match status" value="1"/>
</dbReference>
<dbReference type="SUPFAM" id="SSF52540">
    <property type="entry name" value="P-loop containing nucleoside triphosphate hydrolases"/>
    <property type="match status" value="1"/>
</dbReference>
<dbReference type="SUPFAM" id="SSF52047">
    <property type="entry name" value="RNI-like"/>
    <property type="match status" value="1"/>
</dbReference>
<dbReference type="PROSITE" id="PS50824">
    <property type="entry name" value="DAPIN"/>
    <property type="match status" value="1"/>
</dbReference>
<dbReference type="PROSITE" id="PS51450">
    <property type="entry name" value="LRR"/>
    <property type="match status" value="6"/>
</dbReference>
<dbReference type="PROSITE" id="PS50837">
    <property type="entry name" value="NACHT"/>
    <property type="match status" value="1"/>
</dbReference>
<sequence length="1054" mass="119319">MLPSTARDGLYRLSTYLEELEAGELKKFKLFLGIAEDLSQDKIPWGRMEKAGPLEMAQLMVAHMGTREAWLLALSTFQRIHRKDLWERGQGEDLVRVTPNNGLCLFESQSACPLDVSPNAPRKDLQTTYKDYVRRKFQLMEDRNARLGECVNLSNRYTRLLLVKEHSNPIWTQQKFVDVEWERSRTRRHQTSPIQMETLFEPDEERPEPPHTVVLQGAAGMGKSMLAHKVMLDWADGRLFQGRFDYVFYISCRELNRSHTQCSVQDLISSCWPERGISLEDLMQAPDRLLFIIDGFDKLHPSFHDAQGPWCLCWEEKQPTEVLLGSLIRRLLLPQVSLLITTRPCALEKLHGLLEHPRHVEILGFSEEARKEYFYRYFHNTGQASRVLSFLMDYEPLFTMCFVPMVSWVVCTCLKQQLESGELLRQTPRTTTAVYMFYLLSLMQPKPGTPTFKVPANQRGLVSLAAEGLWNQKILFDEQDLGKHGLDGADVSTFLNVNIFQKGIKCEKFYSFIHLSFQEFFAAMYCALNGREAVRRALAEYGFSERNFLALTVHFLFGLLNEEMRCYLERNLGWSISPQVKEEVLAWIQNKAGSEGSTLQHGSLELLSCLYEVQEEDFIQQALSHFQVVVVRSISTKMEHMVCSFCARYCRSTEVLHLHGSAYSTGMEDDPPEPSGVQTQSTYLQERNMLPDVYSAYLSAAVCTNSNLIELALYRNALGSQGVRLLCQGLRHASCKLQNLRLKRCQISGSACQDLAAAVIANRNLIRLDLSDNSIGVPGLELLCEGLQHPRCRLQMIQLRKCLLEAAAGRSLASVLSNNSYLVELDLTGNPLEDSGLKLLCQGLRHPVCRLRTLWLKICHLGQASCEDLASTLKMNQSLLELDLGLNDLGDSGVLLLCEGLSHPDCKLQTLRLGICRLGSVACVGIASVLQVNTCLQELDLSFNDLGDRGLQLLGEGLRHQTCRLQKLWLDNCGLTSKACEDLSSILGISQTLHELYLTNNALGDTGVCLLCKRLRHPGCKLRVLWLFGMDLNKKTHRRMAALRVTKPYLDIGC</sequence>
<feature type="chain" id="PRO_0000419758" description="NACHT, LRR and PYD domains-containing protein 12">
    <location>
        <begin position="1"/>
        <end position="1054"/>
    </location>
</feature>
<feature type="domain" description="Pyrin" evidence="3">
    <location>
        <begin position="1"/>
        <end position="95"/>
    </location>
</feature>
<feature type="domain" description="FISNA" evidence="2">
    <location>
        <begin position="129"/>
        <end position="201"/>
    </location>
</feature>
<feature type="domain" description="NACHT" evidence="4">
    <location>
        <begin position="211"/>
        <end position="528"/>
    </location>
</feature>
<feature type="repeat" description="LRR 1">
    <location>
        <begin position="821"/>
        <end position="841"/>
    </location>
</feature>
<feature type="repeat" description="LRR 2">
    <location>
        <begin position="850"/>
        <end position="871"/>
    </location>
</feature>
<feature type="repeat" description="LRR 3">
    <location>
        <begin position="878"/>
        <end position="899"/>
    </location>
</feature>
<feature type="repeat" description="LRR 4">
    <location>
        <begin position="907"/>
        <end position="928"/>
    </location>
</feature>
<feature type="repeat" description="LRR 5">
    <location>
        <begin position="935"/>
        <end position="955"/>
    </location>
</feature>
<feature type="repeat" description="LRR 6">
    <location>
        <begin position="964"/>
        <end position="985"/>
    </location>
</feature>
<feature type="repeat" description="LRR 7">
    <location>
        <begin position="992"/>
        <end position="1013"/>
    </location>
</feature>
<feature type="repeat" description="LRR 8">
    <location>
        <begin position="1021"/>
        <end position="1042"/>
    </location>
</feature>
<feature type="binding site" evidence="4">
    <location>
        <begin position="217"/>
        <end position="224"/>
    </location>
    <ligand>
        <name>ATP</name>
        <dbReference type="ChEBI" id="CHEBI:30616"/>
    </ligand>
</feature>
<protein>
    <recommendedName>
        <fullName>NACHT, LRR and PYD domains-containing protein 12</fullName>
    </recommendedName>
    <alternativeName>
        <fullName>Monarch-1</fullName>
    </alternativeName>
    <alternativeName>
        <fullName>PYRIN-containing APAF1-like protein 7</fullName>
        <shortName>PYPAF7</shortName>
    </alternativeName>
</protein>
<accession>E9Q5R7</accession>
<accession>Q3UEM3</accession>
<reference key="1">
    <citation type="journal article" date="2009" name="PLoS Biol.">
        <title>Lineage-specific biology revealed by a finished genome assembly of the mouse.</title>
        <authorList>
            <person name="Church D.M."/>
            <person name="Goodstadt L."/>
            <person name="Hillier L.W."/>
            <person name="Zody M.C."/>
            <person name="Goldstein S."/>
            <person name="She X."/>
            <person name="Bult C.J."/>
            <person name="Agarwala R."/>
            <person name="Cherry J.L."/>
            <person name="DiCuccio M."/>
            <person name="Hlavina W."/>
            <person name="Kapustin Y."/>
            <person name="Meric P."/>
            <person name="Maglott D."/>
            <person name="Birtle Z."/>
            <person name="Marques A.C."/>
            <person name="Graves T."/>
            <person name="Zhou S."/>
            <person name="Teague B."/>
            <person name="Potamousis K."/>
            <person name="Churas C."/>
            <person name="Place M."/>
            <person name="Herschleb J."/>
            <person name="Runnheim R."/>
            <person name="Forrest D."/>
            <person name="Amos-Landgraf J."/>
            <person name="Schwartz D.C."/>
            <person name="Cheng Z."/>
            <person name="Lindblad-Toh K."/>
            <person name="Eichler E.E."/>
            <person name="Ponting C.P."/>
        </authorList>
    </citation>
    <scope>NUCLEOTIDE SEQUENCE [LARGE SCALE GENOMIC DNA]</scope>
    <source>
        <strain>C57BL/6J</strain>
    </source>
</reference>
<reference key="2">
    <citation type="journal article" date="2005" name="Science">
        <title>The transcriptional landscape of the mammalian genome.</title>
        <authorList>
            <person name="Carninci P."/>
            <person name="Kasukawa T."/>
            <person name="Katayama S."/>
            <person name="Gough J."/>
            <person name="Frith M.C."/>
            <person name="Maeda N."/>
            <person name="Oyama R."/>
            <person name="Ravasi T."/>
            <person name="Lenhard B."/>
            <person name="Wells C."/>
            <person name="Kodzius R."/>
            <person name="Shimokawa K."/>
            <person name="Bajic V.B."/>
            <person name="Brenner S.E."/>
            <person name="Batalov S."/>
            <person name="Forrest A.R."/>
            <person name="Zavolan M."/>
            <person name="Davis M.J."/>
            <person name="Wilming L.G."/>
            <person name="Aidinis V."/>
            <person name="Allen J.E."/>
            <person name="Ambesi-Impiombato A."/>
            <person name="Apweiler R."/>
            <person name="Aturaliya R.N."/>
            <person name="Bailey T.L."/>
            <person name="Bansal M."/>
            <person name="Baxter L."/>
            <person name="Beisel K.W."/>
            <person name="Bersano T."/>
            <person name="Bono H."/>
            <person name="Chalk A.M."/>
            <person name="Chiu K.P."/>
            <person name="Choudhary V."/>
            <person name="Christoffels A."/>
            <person name="Clutterbuck D.R."/>
            <person name="Crowe M.L."/>
            <person name="Dalla E."/>
            <person name="Dalrymple B.P."/>
            <person name="de Bono B."/>
            <person name="Della Gatta G."/>
            <person name="di Bernardo D."/>
            <person name="Down T."/>
            <person name="Engstrom P."/>
            <person name="Fagiolini M."/>
            <person name="Faulkner G."/>
            <person name="Fletcher C.F."/>
            <person name="Fukushima T."/>
            <person name="Furuno M."/>
            <person name="Futaki S."/>
            <person name="Gariboldi M."/>
            <person name="Georgii-Hemming P."/>
            <person name="Gingeras T.R."/>
            <person name="Gojobori T."/>
            <person name="Green R.E."/>
            <person name="Gustincich S."/>
            <person name="Harbers M."/>
            <person name="Hayashi Y."/>
            <person name="Hensch T.K."/>
            <person name="Hirokawa N."/>
            <person name="Hill D."/>
            <person name="Huminiecki L."/>
            <person name="Iacono M."/>
            <person name="Ikeo K."/>
            <person name="Iwama A."/>
            <person name="Ishikawa T."/>
            <person name="Jakt M."/>
            <person name="Kanapin A."/>
            <person name="Katoh M."/>
            <person name="Kawasawa Y."/>
            <person name="Kelso J."/>
            <person name="Kitamura H."/>
            <person name="Kitano H."/>
            <person name="Kollias G."/>
            <person name="Krishnan S.P."/>
            <person name="Kruger A."/>
            <person name="Kummerfeld S.K."/>
            <person name="Kurochkin I.V."/>
            <person name="Lareau L.F."/>
            <person name="Lazarevic D."/>
            <person name="Lipovich L."/>
            <person name="Liu J."/>
            <person name="Liuni S."/>
            <person name="McWilliam S."/>
            <person name="Madan Babu M."/>
            <person name="Madera M."/>
            <person name="Marchionni L."/>
            <person name="Matsuda H."/>
            <person name="Matsuzawa S."/>
            <person name="Miki H."/>
            <person name="Mignone F."/>
            <person name="Miyake S."/>
            <person name="Morris K."/>
            <person name="Mottagui-Tabar S."/>
            <person name="Mulder N."/>
            <person name="Nakano N."/>
            <person name="Nakauchi H."/>
            <person name="Ng P."/>
            <person name="Nilsson R."/>
            <person name="Nishiguchi S."/>
            <person name="Nishikawa S."/>
            <person name="Nori F."/>
            <person name="Ohara O."/>
            <person name="Okazaki Y."/>
            <person name="Orlando V."/>
            <person name="Pang K.C."/>
            <person name="Pavan W.J."/>
            <person name="Pavesi G."/>
            <person name="Pesole G."/>
            <person name="Petrovsky N."/>
            <person name="Piazza S."/>
            <person name="Reed J."/>
            <person name="Reid J.F."/>
            <person name="Ring B.Z."/>
            <person name="Ringwald M."/>
            <person name="Rost B."/>
            <person name="Ruan Y."/>
            <person name="Salzberg S.L."/>
            <person name="Sandelin A."/>
            <person name="Schneider C."/>
            <person name="Schoenbach C."/>
            <person name="Sekiguchi K."/>
            <person name="Semple C.A."/>
            <person name="Seno S."/>
            <person name="Sessa L."/>
            <person name="Sheng Y."/>
            <person name="Shibata Y."/>
            <person name="Shimada H."/>
            <person name="Shimada K."/>
            <person name="Silva D."/>
            <person name="Sinclair B."/>
            <person name="Sperling S."/>
            <person name="Stupka E."/>
            <person name="Sugiura K."/>
            <person name="Sultana R."/>
            <person name="Takenaka Y."/>
            <person name="Taki K."/>
            <person name="Tammoja K."/>
            <person name="Tan S.L."/>
            <person name="Tang S."/>
            <person name="Taylor M.S."/>
            <person name="Tegner J."/>
            <person name="Teichmann S.A."/>
            <person name="Ueda H.R."/>
            <person name="van Nimwegen E."/>
            <person name="Verardo R."/>
            <person name="Wei C.L."/>
            <person name="Yagi K."/>
            <person name="Yamanishi H."/>
            <person name="Zabarovsky E."/>
            <person name="Zhu S."/>
            <person name="Zimmer A."/>
            <person name="Hide W."/>
            <person name="Bult C."/>
            <person name="Grimmond S.M."/>
            <person name="Teasdale R.D."/>
            <person name="Liu E.T."/>
            <person name="Brusic V."/>
            <person name="Quackenbush J."/>
            <person name="Wahlestedt C."/>
            <person name="Mattick J.S."/>
            <person name="Hume D.A."/>
            <person name="Kai C."/>
            <person name="Sasaki D."/>
            <person name="Tomaru Y."/>
            <person name="Fukuda S."/>
            <person name="Kanamori-Katayama M."/>
            <person name="Suzuki M."/>
            <person name="Aoki J."/>
            <person name="Arakawa T."/>
            <person name="Iida J."/>
            <person name="Imamura K."/>
            <person name="Itoh M."/>
            <person name="Kato T."/>
            <person name="Kawaji H."/>
            <person name="Kawagashira N."/>
            <person name="Kawashima T."/>
            <person name="Kojima M."/>
            <person name="Kondo S."/>
            <person name="Konno H."/>
            <person name="Nakano K."/>
            <person name="Ninomiya N."/>
            <person name="Nishio T."/>
            <person name="Okada M."/>
            <person name="Plessy C."/>
            <person name="Shibata K."/>
            <person name="Shiraki T."/>
            <person name="Suzuki S."/>
            <person name="Tagami M."/>
            <person name="Waki K."/>
            <person name="Watahiki A."/>
            <person name="Okamura-Oho Y."/>
            <person name="Suzuki H."/>
            <person name="Kawai J."/>
            <person name="Hayashizaki Y."/>
        </authorList>
    </citation>
    <scope>NUCLEOTIDE SEQUENCE [LARGE SCALE MRNA] OF 921-1054</scope>
    <source>
        <strain>C57BL/6J</strain>
        <tissue>Liver</tissue>
    </source>
</reference>
<reference key="3">
    <citation type="journal article" date="2010" name="J. Immunol.">
        <title>NLRP12 controls dendritic and myeloid cell migration to affect contact hypersensitivity.</title>
        <authorList>
            <person name="Arthur J.C."/>
            <person name="Lich J.D."/>
            <person name="Ye Z."/>
            <person name="Allen I.C."/>
            <person name="Gris D."/>
            <person name="Wilson J.E."/>
            <person name="Schneider M."/>
            <person name="Roney K.E."/>
            <person name="O'Connor B.P."/>
            <person name="Moore C.B."/>
            <person name="Morrison A."/>
            <person name="Sutterwala F.S."/>
            <person name="Bertin J."/>
            <person name="Koller B.H."/>
            <person name="Liu Z."/>
            <person name="Ting J.P."/>
        </authorList>
    </citation>
    <scope>FUNCTION</scope>
    <scope>TISSUE SPECIFICITY</scope>
    <scope>DISRUPTION PHENOTYPE</scope>
</reference>
<reference key="4">
    <citation type="journal article" date="2015" name="J. Neuroinflamm.">
        <title>The nod-like receptor, Nlrp12, plays an anti-inflammatory role in experimental autoimmune encephalomyelitis.</title>
        <authorList>
            <person name="Gharagozloo M."/>
            <person name="Mahvelati T.M."/>
            <person name="Imbeault E."/>
            <person name="Gris P."/>
            <person name="Zerif E."/>
            <person name="Bobbala D."/>
            <person name="Ilangumaran S."/>
            <person name="Amrani A."/>
            <person name="Gris D."/>
        </authorList>
    </citation>
    <scope>FUNCTION</scope>
    <scope>DISRUPTION PHENOTYPE</scope>
</reference>
<reference key="5">
    <citation type="journal article" date="2018" name="Nat. Commun.">
        <title>Proteasomal degradation of NOD2 by NLRP12 in monocytes promotes bacterial tolerance and colonization by enteropathogens.</title>
        <authorList>
            <person name="Normand S."/>
            <person name="Waldschmitt N."/>
            <person name="Neerincx A."/>
            <person name="Martinez-Torres R.J."/>
            <person name="Chauvin C."/>
            <person name="Couturier-Maillard A."/>
            <person name="Boulard O."/>
            <person name="Cobret L."/>
            <person name="Awad F."/>
            <person name="Huot L."/>
            <person name="Ribeiro-Ribeiro A."/>
            <person name="Lautz K."/>
            <person name="Ruez R."/>
            <person name="Delacre M."/>
            <person name="Bondu C."/>
            <person name="Guilliams M."/>
            <person name="Scott C."/>
            <person name="Segal A."/>
            <person name="Amselem S."/>
            <person name="Hot D."/>
            <person name="Karabina S."/>
            <person name="Bohn E."/>
            <person name="Ryffel B."/>
            <person name="Poulin L.F."/>
            <person name="Kufer T.A."/>
            <person name="Chamaillard M."/>
        </authorList>
    </citation>
    <scope>FUNCTION</scope>
    <scope>DISRUPTION PHENOTYPE</scope>
</reference>
<reference key="6">
    <citation type="journal article" date="2018" name="Cell Host Microbe">
        <title>The Inhibitory Innate Immune Sensor NLRP12 Maintains a Threshold against Obesity by Regulating Gut Microbiota Homeostasis.</title>
        <authorList>
            <person name="Truax A.D."/>
            <person name="Chen L."/>
            <person name="Tam J.W."/>
            <person name="Cheng N."/>
            <person name="Guo H."/>
            <person name="Koblansky A.A."/>
            <person name="Chou W.C."/>
            <person name="Wilson J.E."/>
            <person name="Brickey W.J."/>
            <person name="Petrucelli A."/>
            <person name="Liu R."/>
            <person name="Cooper D.E."/>
            <person name="Koenigsknecht M.J."/>
            <person name="Young V.B."/>
            <person name="Netea M.G."/>
            <person name="Stienstra R."/>
            <person name="Sartor R.B."/>
            <person name="Montgomery S.A."/>
            <person name="Coleman R.A."/>
            <person name="Ting J.P."/>
        </authorList>
    </citation>
    <scope>FUNCTION</scope>
    <scope>DISRUPTION PHENOTYPE</scope>
</reference>
<reference key="7">
    <citation type="journal article" date="2019" name="Cell Host Microbe">
        <title>NLRP12 Regulates Anti-viral RIG-I Activation via Interaction with TRIM25.</title>
        <authorList>
            <person name="Chen S.T."/>
            <person name="Chen L."/>
            <person name="Lin D.S."/>
            <person name="Chen S.Y."/>
            <person name="Tsao Y.P."/>
            <person name="Guo H."/>
            <person name="Li F.J."/>
            <person name="Tseng W.T."/>
            <person name="Tam J.W."/>
            <person name="Chao C.W."/>
            <person name="Brickey W.J."/>
            <person name="Dzhagalov I."/>
            <person name="Song M.J."/>
            <person name="Kang H.R."/>
            <person name="Jung J.U."/>
            <person name="Ting J.P."/>
        </authorList>
    </citation>
    <scope>DISRUPTION PHENOTYPE</scope>
</reference>
<comment type="function">
    <text evidence="1 6 7 8">Plays an essential role as an potent mitigator of inflammation (PubMed:26521018, PubMed:30559449). Primarily expressed in dendritic cells and macrophages, inhibits both canonical and non-canonical NF-kappa-B and ERK activation pathways (PubMed:30559449). Functions as a negative regulator of NOD2 by targeting it to degradation via the proteasome pathway (PubMed:30559449). In turn, promotes bacterial tolerance (PubMed:30559449). Also inhibits the RIGI-mediated immune signaling against RNA viruses by reducing the E3 ubiquitin ligase TRIM25-mediated 'Lys-63'-linked RIGI activation but enhancing the E3 ubiquitin ligase RNF125-mediated 'Lys-48'-linked RIGI degradation (By similarity). Also acts as a negative regulator of inflammatory response to mitigate obesity and obesity-associated diseases in adipose tissue (PubMed:30212649).</text>
</comment>
<comment type="subunit">
    <text evidence="1 8">Interacts (via pyrin domain) with ASC. Interacts (via pyrin domain) with FAF1 (via UBA domain) (By similarity). Interacts with MAP3K14; this interaction promotes proteasomal degradation of MAP3K14 (By similarity). Interacts with NOD2; this interaction promotes degradation of NOD2 through the ubiquitin-proteasome pathway (PubMed:30559449). Interacts with HSPA1A and HSPA8 (By similarity). Interacts with HSP90AA1 (PubMed:30559449). Interacts with TRIM25; this interaction inhibits RIGI-mediated signaling pathway (By similarity).</text>
</comment>
<comment type="interaction">
    <interactant intactId="EBI-26583426">
        <id>E9Q5R7</id>
    </interactant>
    <interactant intactId="EBI-25475864">
        <id>PRO_0000449623</id>
        <label>rep</label>
        <dbReference type="UniProtKB" id="P0DTD1"/>
    </interactant>
    <organismsDiffer>true</organismsDiffer>
    <experiments>2</experiments>
</comment>
<comment type="subcellular location">
    <subcellularLocation>
        <location evidence="1">Cytoplasm</location>
    </subcellularLocation>
</comment>
<comment type="tissue specificity">
    <text evidence="5">Mainly expressed in dendritic cells (DCs) and neutrophils.</text>
</comment>
<comment type="disruption phenotype">
    <text evidence="5 6 7 9">NLRP12-deficient mice exhibit attenuated inflammatory responses due to significantly reduced capacity of dendritic cells to migrate to draining lymph nodes (PubMed:20861349). They also gained significantly more weight and a greater percentage of body fat than wild-type mice (PubMed:30212649). NLRP12-deficient mice also exhibit enhanced disease in a mouse model of multiple sclerosis (PubMed:26521018). During viral infection, augments host response with greater type I interferon production and RIGI protein (PubMed:30902577).</text>
</comment>
<comment type="similarity">
    <text evidence="10">Belongs to the NLRP family.</text>
</comment>
<organism>
    <name type="scientific">Mus musculus</name>
    <name type="common">Mouse</name>
    <dbReference type="NCBI Taxonomy" id="10090"/>
    <lineage>
        <taxon>Eukaryota</taxon>
        <taxon>Metazoa</taxon>
        <taxon>Chordata</taxon>
        <taxon>Craniata</taxon>
        <taxon>Vertebrata</taxon>
        <taxon>Euteleostomi</taxon>
        <taxon>Mammalia</taxon>
        <taxon>Eutheria</taxon>
        <taxon>Euarchontoglires</taxon>
        <taxon>Glires</taxon>
        <taxon>Rodentia</taxon>
        <taxon>Myomorpha</taxon>
        <taxon>Muroidea</taxon>
        <taxon>Muridae</taxon>
        <taxon>Murinae</taxon>
        <taxon>Mus</taxon>
        <taxon>Mus</taxon>
    </lineage>
</organism>
<proteinExistence type="evidence at protein level"/>
<name>NAL12_MOUSE</name>
<gene>
    <name type="primary">Nlrp12</name>
    <name type="synonym">NALP12</name>
</gene>
<keyword id="KW-0067">ATP-binding</keyword>
<keyword id="KW-0963">Cytoplasm</keyword>
<keyword id="KW-0433">Leucine-rich repeat</keyword>
<keyword id="KW-0547">Nucleotide-binding</keyword>
<keyword id="KW-1185">Reference proteome</keyword>
<keyword id="KW-0677">Repeat</keyword>